<dbReference type="EMBL" id="CU459141">
    <property type="protein sequence ID" value="CAM86207.1"/>
    <property type="molecule type" value="Genomic_DNA"/>
</dbReference>
<dbReference type="RefSeq" id="WP_001136722.1">
    <property type="nucleotide sequence ID" value="NZ_JBDGFB010000016.1"/>
</dbReference>
<dbReference type="SMR" id="B0V810"/>
<dbReference type="EnsemblBacteria" id="CAM86207">
    <property type="protein sequence ID" value="CAM86207"/>
    <property type="gene ID" value="ABAYE1286"/>
</dbReference>
<dbReference type="GeneID" id="97425938"/>
<dbReference type="KEGG" id="aby:ABAYE1286"/>
<dbReference type="HOGENOM" id="CLU_159258_1_0_6"/>
<dbReference type="GO" id="GO:1990904">
    <property type="term" value="C:ribonucleoprotein complex"/>
    <property type="evidence" value="ECO:0007669"/>
    <property type="project" value="UniProtKB-KW"/>
</dbReference>
<dbReference type="GO" id="GO:0005840">
    <property type="term" value="C:ribosome"/>
    <property type="evidence" value="ECO:0007669"/>
    <property type="project" value="UniProtKB-KW"/>
</dbReference>
<dbReference type="GO" id="GO:0003735">
    <property type="term" value="F:structural constituent of ribosome"/>
    <property type="evidence" value="ECO:0007669"/>
    <property type="project" value="InterPro"/>
</dbReference>
<dbReference type="GO" id="GO:0006412">
    <property type="term" value="P:translation"/>
    <property type="evidence" value="ECO:0007669"/>
    <property type="project" value="UniProtKB-UniRule"/>
</dbReference>
<dbReference type="Gene3D" id="1.20.5.1150">
    <property type="entry name" value="Ribosomal protein S8"/>
    <property type="match status" value="1"/>
</dbReference>
<dbReference type="HAMAP" id="MF_00358">
    <property type="entry name" value="Ribosomal_bS21"/>
    <property type="match status" value="1"/>
</dbReference>
<dbReference type="InterPro" id="IPR001911">
    <property type="entry name" value="Ribosomal_bS21"/>
</dbReference>
<dbReference type="InterPro" id="IPR018278">
    <property type="entry name" value="Ribosomal_bS21_CS"/>
</dbReference>
<dbReference type="InterPro" id="IPR038380">
    <property type="entry name" value="Ribosomal_bS21_sf"/>
</dbReference>
<dbReference type="NCBIfam" id="TIGR00030">
    <property type="entry name" value="S21p"/>
    <property type="match status" value="1"/>
</dbReference>
<dbReference type="PANTHER" id="PTHR21109">
    <property type="entry name" value="MITOCHONDRIAL 28S RIBOSOMAL PROTEIN S21"/>
    <property type="match status" value="1"/>
</dbReference>
<dbReference type="PANTHER" id="PTHR21109:SF22">
    <property type="entry name" value="SMALL RIBOSOMAL SUBUNIT PROTEIN BS21"/>
    <property type="match status" value="1"/>
</dbReference>
<dbReference type="Pfam" id="PF01165">
    <property type="entry name" value="Ribosomal_S21"/>
    <property type="match status" value="1"/>
</dbReference>
<dbReference type="PRINTS" id="PR00976">
    <property type="entry name" value="RIBOSOMALS21"/>
</dbReference>
<dbReference type="PROSITE" id="PS01181">
    <property type="entry name" value="RIBOSOMAL_S21"/>
    <property type="match status" value="1"/>
</dbReference>
<gene>
    <name evidence="1" type="primary">rpsU</name>
    <name type="ordered locus">ABAYE1286</name>
</gene>
<feature type="chain" id="PRO_1000120574" description="Small ribosomal subunit protein bS21">
    <location>
        <begin position="1"/>
        <end position="71"/>
    </location>
</feature>
<organism>
    <name type="scientific">Acinetobacter baumannii (strain AYE)</name>
    <dbReference type="NCBI Taxonomy" id="509173"/>
    <lineage>
        <taxon>Bacteria</taxon>
        <taxon>Pseudomonadati</taxon>
        <taxon>Pseudomonadota</taxon>
        <taxon>Gammaproteobacteria</taxon>
        <taxon>Moraxellales</taxon>
        <taxon>Moraxellaceae</taxon>
        <taxon>Acinetobacter</taxon>
        <taxon>Acinetobacter calcoaceticus/baumannii complex</taxon>
    </lineage>
</organism>
<evidence type="ECO:0000255" key="1">
    <source>
        <dbReference type="HAMAP-Rule" id="MF_00358"/>
    </source>
</evidence>
<evidence type="ECO:0000305" key="2"/>
<accession>B0V810</accession>
<protein>
    <recommendedName>
        <fullName evidence="1">Small ribosomal subunit protein bS21</fullName>
    </recommendedName>
    <alternativeName>
        <fullName evidence="2">30S ribosomal protein S21</fullName>
    </alternativeName>
</protein>
<reference key="1">
    <citation type="journal article" date="2008" name="PLoS ONE">
        <title>Comparative analysis of Acinetobacters: three genomes for three lifestyles.</title>
        <authorList>
            <person name="Vallenet D."/>
            <person name="Nordmann P."/>
            <person name="Barbe V."/>
            <person name="Poirel L."/>
            <person name="Mangenot S."/>
            <person name="Bataille E."/>
            <person name="Dossat C."/>
            <person name="Gas S."/>
            <person name="Kreimeyer A."/>
            <person name="Lenoble P."/>
            <person name="Oztas S."/>
            <person name="Poulain J."/>
            <person name="Segurens B."/>
            <person name="Robert C."/>
            <person name="Abergel C."/>
            <person name="Claverie J.-M."/>
            <person name="Raoult D."/>
            <person name="Medigue C."/>
            <person name="Weissenbach J."/>
            <person name="Cruveiller S."/>
        </authorList>
    </citation>
    <scope>NUCLEOTIDE SEQUENCE [LARGE SCALE GENOMIC DNA]</scope>
    <source>
        <strain>AYE</strain>
    </source>
</reference>
<keyword id="KW-0687">Ribonucleoprotein</keyword>
<keyword id="KW-0689">Ribosomal protein</keyword>
<proteinExistence type="inferred from homology"/>
<sequence length="71" mass="8451">MPQVKLKEGEPVDVAIRRFKRSCEKAGVLADVRKREFYEKPTQERKRKKAAAVKRYQKKLARESVRTTRLY</sequence>
<name>RS21_ACIBY</name>
<comment type="similarity">
    <text evidence="1">Belongs to the bacterial ribosomal protein bS21 family.</text>
</comment>